<protein>
    <recommendedName>
        <fullName evidence="1">Leucine--tRNA ligase</fullName>
        <ecNumber evidence="1">6.1.1.4</ecNumber>
    </recommendedName>
    <alternativeName>
        <fullName evidence="1">Leucyl-tRNA synthetase</fullName>
        <shortName evidence="1">LeuRS</shortName>
    </alternativeName>
</protein>
<dbReference type="EC" id="6.1.1.4" evidence="1"/>
<dbReference type="EMBL" id="AP009380">
    <property type="protein sequence ID" value="BAG33338.1"/>
    <property type="molecule type" value="Genomic_DNA"/>
</dbReference>
<dbReference type="RefSeq" id="WP_012457800.1">
    <property type="nucleotide sequence ID" value="NC_010729.1"/>
</dbReference>
<dbReference type="SMR" id="B2RIZ3"/>
<dbReference type="GeneID" id="29256038"/>
<dbReference type="KEGG" id="pgn:PGN_0819"/>
<dbReference type="eggNOG" id="COG0495">
    <property type="taxonomic scope" value="Bacteria"/>
</dbReference>
<dbReference type="HOGENOM" id="CLU_004427_0_0_10"/>
<dbReference type="OrthoDB" id="9810365at2"/>
<dbReference type="BioCyc" id="PGIN431947:G1G2V-897-MONOMER"/>
<dbReference type="Proteomes" id="UP000008842">
    <property type="component" value="Chromosome"/>
</dbReference>
<dbReference type="GO" id="GO:0005829">
    <property type="term" value="C:cytosol"/>
    <property type="evidence" value="ECO:0007669"/>
    <property type="project" value="TreeGrafter"/>
</dbReference>
<dbReference type="GO" id="GO:0002161">
    <property type="term" value="F:aminoacyl-tRNA deacylase activity"/>
    <property type="evidence" value="ECO:0007669"/>
    <property type="project" value="InterPro"/>
</dbReference>
<dbReference type="GO" id="GO:0005524">
    <property type="term" value="F:ATP binding"/>
    <property type="evidence" value="ECO:0007669"/>
    <property type="project" value="UniProtKB-UniRule"/>
</dbReference>
<dbReference type="GO" id="GO:0004823">
    <property type="term" value="F:leucine-tRNA ligase activity"/>
    <property type="evidence" value="ECO:0007669"/>
    <property type="project" value="UniProtKB-UniRule"/>
</dbReference>
<dbReference type="GO" id="GO:0006429">
    <property type="term" value="P:leucyl-tRNA aminoacylation"/>
    <property type="evidence" value="ECO:0007669"/>
    <property type="project" value="UniProtKB-UniRule"/>
</dbReference>
<dbReference type="CDD" id="cd07958">
    <property type="entry name" value="Anticodon_Ia_Leu_BEm"/>
    <property type="match status" value="1"/>
</dbReference>
<dbReference type="FunFam" id="3.40.50.620:FF:000056">
    <property type="entry name" value="Leucine--tRNA ligase"/>
    <property type="match status" value="1"/>
</dbReference>
<dbReference type="FunFam" id="3.40.50.620:FF:000060">
    <property type="entry name" value="Leucine--tRNA ligase"/>
    <property type="match status" value="1"/>
</dbReference>
<dbReference type="FunFam" id="3.40.50.620:FF:000154">
    <property type="entry name" value="Leucine--tRNA ligase"/>
    <property type="match status" value="1"/>
</dbReference>
<dbReference type="FunFam" id="1.10.730.10:FF:000011">
    <property type="entry name" value="Leucine--tRNA ligase chloroplastic/mitochondrial"/>
    <property type="match status" value="1"/>
</dbReference>
<dbReference type="Gene3D" id="3.40.50.620">
    <property type="entry name" value="HUPs"/>
    <property type="match status" value="3"/>
</dbReference>
<dbReference type="Gene3D" id="1.10.730.10">
    <property type="entry name" value="Isoleucyl-tRNA Synthetase, Domain 1"/>
    <property type="match status" value="2"/>
</dbReference>
<dbReference type="HAMAP" id="MF_00049_B">
    <property type="entry name" value="Leu_tRNA_synth_B"/>
    <property type="match status" value="1"/>
</dbReference>
<dbReference type="InterPro" id="IPR001412">
    <property type="entry name" value="aa-tRNA-synth_I_CS"/>
</dbReference>
<dbReference type="InterPro" id="IPR002302">
    <property type="entry name" value="Leu-tRNA-ligase"/>
</dbReference>
<dbReference type="InterPro" id="IPR025709">
    <property type="entry name" value="Leu_tRNA-synth_edit"/>
</dbReference>
<dbReference type="InterPro" id="IPR013155">
    <property type="entry name" value="M/V/L/I-tRNA-synth_anticd-bd"/>
</dbReference>
<dbReference type="InterPro" id="IPR015413">
    <property type="entry name" value="Methionyl/Leucyl_tRNA_Synth"/>
</dbReference>
<dbReference type="InterPro" id="IPR014729">
    <property type="entry name" value="Rossmann-like_a/b/a_fold"/>
</dbReference>
<dbReference type="InterPro" id="IPR009080">
    <property type="entry name" value="tRNAsynth_Ia_anticodon-bd"/>
</dbReference>
<dbReference type="InterPro" id="IPR009008">
    <property type="entry name" value="Val/Leu/Ile-tRNA-synth_edit"/>
</dbReference>
<dbReference type="NCBIfam" id="TIGR00396">
    <property type="entry name" value="leuS_bact"/>
    <property type="match status" value="1"/>
</dbReference>
<dbReference type="PANTHER" id="PTHR43740:SF2">
    <property type="entry name" value="LEUCINE--TRNA LIGASE, MITOCHONDRIAL"/>
    <property type="match status" value="1"/>
</dbReference>
<dbReference type="PANTHER" id="PTHR43740">
    <property type="entry name" value="LEUCYL-TRNA SYNTHETASE"/>
    <property type="match status" value="1"/>
</dbReference>
<dbReference type="Pfam" id="PF08264">
    <property type="entry name" value="Anticodon_1"/>
    <property type="match status" value="1"/>
</dbReference>
<dbReference type="Pfam" id="PF13603">
    <property type="entry name" value="tRNA-synt_1_2"/>
    <property type="match status" value="1"/>
</dbReference>
<dbReference type="Pfam" id="PF09334">
    <property type="entry name" value="tRNA-synt_1g"/>
    <property type="match status" value="1"/>
</dbReference>
<dbReference type="PRINTS" id="PR00985">
    <property type="entry name" value="TRNASYNTHLEU"/>
</dbReference>
<dbReference type="SUPFAM" id="SSF47323">
    <property type="entry name" value="Anticodon-binding domain of a subclass of class I aminoacyl-tRNA synthetases"/>
    <property type="match status" value="1"/>
</dbReference>
<dbReference type="SUPFAM" id="SSF52374">
    <property type="entry name" value="Nucleotidylyl transferase"/>
    <property type="match status" value="1"/>
</dbReference>
<dbReference type="SUPFAM" id="SSF50677">
    <property type="entry name" value="ValRS/IleRS/LeuRS editing domain"/>
    <property type="match status" value="1"/>
</dbReference>
<dbReference type="PROSITE" id="PS00178">
    <property type="entry name" value="AA_TRNA_LIGASE_I"/>
    <property type="match status" value="1"/>
</dbReference>
<comment type="catalytic activity">
    <reaction evidence="1">
        <text>tRNA(Leu) + L-leucine + ATP = L-leucyl-tRNA(Leu) + AMP + diphosphate</text>
        <dbReference type="Rhea" id="RHEA:11688"/>
        <dbReference type="Rhea" id="RHEA-COMP:9613"/>
        <dbReference type="Rhea" id="RHEA-COMP:9622"/>
        <dbReference type="ChEBI" id="CHEBI:30616"/>
        <dbReference type="ChEBI" id="CHEBI:33019"/>
        <dbReference type="ChEBI" id="CHEBI:57427"/>
        <dbReference type="ChEBI" id="CHEBI:78442"/>
        <dbReference type="ChEBI" id="CHEBI:78494"/>
        <dbReference type="ChEBI" id="CHEBI:456215"/>
        <dbReference type="EC" id="6.1.1.4"/>
    </reaction>
</comment>
<comment type="subcellular location">
    <subcellularLocation>
        <location evidence="1">Cytoplasm</location>
    </subcellularLocation>
</comment>
<comment type="similarity">
    <text evidence="1">Belongs to the class-I aminoacyl-tRNA synthetase family.</text>
</comment>
<reference key="1">
    <citation type="journal article" date="2008" name="DNA Res.">
        <title>Determination of the genome sequence of Porphyromonas gingivalis strain ATCC 33277 and genomic comparison with strain W83 revealed extensive genome rearrangements in P. gingivalis.</title>
        <authorList>
            <person name="Naito M."/>
            <person name="Hirakawa H."/>
            <person name="Yamashita A."/>
            <person name="Ohara N."/>
            <person name="Shoji M."/>
            <person name="Yukitake H."/>
            <person name="Nakayama K."/>
            <person name="Toh H."/>
            <person name="Yoshimura F."/>
            <person name="Kuhara S."/>
            <person name="Hattori M."/>
            <person name="Hayashi T."/>
            <person name="Nakayama K."/>
        </authorList>
    </citation>
    <scope>NUCLEOTIDE SEQUENCE [LARGE SCALE GENOMIC DNA]</scope>
    <source>
        <strain>ATCC 33277 / DSM 20709 / CIP 103683 / JCM 12257 / NCTC 11834 / 2561</strain>
    </source>
</reference>
<accession>B2RIZ3</accession>
<gene>
    <name evidence="1" type="primary">leuS</name>
    <name type="ordered locus">PGN_0819</name>
</gene>
<sequence length="925" mass="106051">MEYNFQEIEKRVQGQWRKDKVYRVAEDTSKKPFYVLDMFPYPSGAGLHVGHPLGYIASDIFSRYKRLRGFNVLHPMGYDAFGLPAEQYAIQTGQHPEKTTEENTARYREQLDKIGFSYDWEREIRTCDPNYYKWTQWAFLKMFDSYYCNQAQQARPISELIEVFARQGNEGLNVACGEGVRFTAEEWTAMSEKEQQEILMNYRLAYLGDTMVNWCPALGTVLANDEVKDGVSERGGHPVEQKKMRQWCLRVSAYAERLLHDLETLDWTESLKETQRNWIGRSEGAEMEFRLAGKDCTFTIFTTRADTIFGVTFMVLAPESELVEEVTTEEQRAAVETYLTETKRRTERERISDKRVSGVFSGSYAINPLTGKEIPIWISDYVLAGYGTGAIMAVPAHDTRDFAFARHFDLPIVQVVVPEGETATDPATWEDAKDSKSGIMVNSDFLNGLSVEDAIAQTKEYIREKHLGCVKVNYRLRDAIFSRQRYWGEPFPIYYKEGMPHALDEDRLPLRLPEVDKFLPTESGEPPLGRATGWHTAEGYPYELSTMPGFAGSSAYYLRYMDPQNDTALVSRSANEYWRHVDLYIGGTEHATGHLIYSRFWNKFLFDLGIVCEAEPFRKLVNQGMIQGRSNFVYRIKNTNTFVSYGLREQYEVTPLHVDVNIVSNDQLDIDRFRAWRPEYASAEFILEDGKYICGWAIEKMSKSMFNVVNPDDIIARYGADTLRLYEMFLGPLEQSKPWDTNGIDGVHRFLKKFWALYYNADGIRVTDTAPTKEELKSLHKLIKKVGQDIESFSFNTSIPAFMICVNELTAAKTTSRAILCPLLTVLSPFAPHITEWLWQELGVEGSIVTATWPEYNEEYLVESCVRYPVSFNGKVRFNIELPADMSKKDVEQAALTAPEAARWLEGKSPKKVIVVPGRIVNVVV</sequence>
<proteinExistence type="inferred from homology"/>
<feature type="chain" id="PRO_1000091343" description="Leucine--tRNA ligase">
    <location>
        <begin position="1"/>
        <end position="925"/>
    </location>
</feature>
<feature type="short sequence motif" description="'HIGH' region">
    <location>
        <begin position="40"/>
        <end position="51"/>
    </location>
</feature>
<feature type="short sequence motif" description="'KMSKS' region">
    <location>
        <begin position="700"/>
        <end position="704"/>
    </location>
</feature>
<feature type="binding site" evidence="1">
    <location>
        <position position="703"/>
    </location>
    <ligand>
        <name>ATP</name>
        <dbReference type="ChEBI" id="CHEBI:30616"/>
    </ligand>
</feature>
<organism>
    <name type="scientific">Porphyromonas gingivalis (strain ATCC 33277 / DSM 20709 / CIP 103683 / JCM 12257 / NCTC 11834 / 2561)</name>
    <dbReference type="NCBI Taxonomy" id="431947"/>
    <lineage>
        <taxon>Bacteria</taxon>
        <taxon>Pseudomonadati</taxon>
        <taxon>Bacteroidota</taxon>
        <taxon>Bacteroidia</taxon>
        <taxon>Bacteroidales</taxon>
        <taxon>Porphyromonadaceae</taxon>
        <taxon>Porphyromonas</taxon>
    </lineage>
</organism>
<keyword id="KW-0030">Aminoacyl-tRNA synthetase</keyword>
<keyword id="KW-0067">ATP-binding</keyword>
<keyword id="KW-0963">Cytoplasm</keyword>
<keyword id="KW-0436">Ligase</keyword>
<keyword id="KW-0547">Nucleotide-binding</keyword>
<keyword id="KW-0648">Protein biosynthesis</keyword>
<name>SYL_PORG3</name>
<evidence type="ECO:0000255" key="1">
    <source>
        <dbReference type="HAMAP-Rule" id="MF_00049"/>
    </source>
</evidence>